<sequence length="483" mass="55600">MLTADSLNLILAISEGELVEEIVIALLASPQLAVFFEKFPRLKHALTQDIPRWREQLKTRLKEAHVPPELEEEVIGYQKSQLLSTSQFIVQLPQISALLRRVGSPFADQAQRLIADNPHFTPALHTLFLQRWRLSLVVQATSFNQQLLEEEREQLLSEVQERMTLSGQLEQVLVENEDSAGRLWDMSDGKLRRGDYQLIVKYGDFLADQPELMQLAEQLGRSREAKSVPKKEAPLETFRTLVREPASVPEQVDGLQRSDDILRLLPPELATLGITELEYEFYRRLVEKQLLTYRLQGDAWREKVMQRPVTRQDYDEQPRGPFIVCVDTSGSMGGFNEQCAKAFCLALMRIALADNRRCFIMLFSSEVVRYELCGRDGIEQAIRFLSQRFRGGTDLASCFRAIAEKLQGGEWFDADAVVVSDFIAQRLPDEVVNKVKELQRVHQHRFHAVAMSAHGKPGIMRIFDHIWRFDTGMRSRLVRRLRR</sequence>
<keyword id="KW-0143">Chaperone</keyword>
<keyword id="KW-0963">Cytoplasm</keyword>
<keyword id="KW-1185">Reference proteome</keyword>
<reference key="1">
    <citation type="journal article" date="2010" name="PLoS ONE">
        <title>Genome sequence of Cronobacter sakazakii BAA-894 and comparative genomic hybridization analysis with other Cronobacter species.</title>
        <authorList>
            <person name="Kucerova E."/>
            <person name="Clifton S.W."/>
            <person name="Xia X.Q."/>
            <person name="Long F."/>
            <person name="Porwollik S."/>
            <person name="Fulton L."/>
            <person name="Fronick C."/>
            <person name="Minx P."/>
            <person name="Kyung K."/>
            <person name="Warren W."/>
            <person name="Fulton R."/>
            <person name="Feng D."/>
            <person name="Wollam A."/>
            <person name="Shah N."/>
            <person name="Bhonagiri V."/>
            <person name="Nash W.E."/>
            <person name="Hallsworth-Pepin K."/>
            <person name="Wilson R.K."/>
            <person name="McClelland M."/>
            <person name="Forsythe S.J."/>
        </authorList>
    </citation>
    <scope>NUCLEOTIDE SEQUENCE [LARGE SCALE GENOMIC DNA]</scope>
    <source>
        <strain>ATCC BAA-894</strain>
    </source>
</reference>
<accession>A7MMV1</accession>
<evidence type="ECO:0000255" key="1">
    <source>
        <dbReference type="HAMAP-Rule" id="MF_01626"/>
    </source>
</evidence>
<organism>
    <name type="scientific">Cronobacter sakazakii (strain ATCC BAA-894)</name>
    <name type="common">Enterobacter sakazakii</name>
    <dbReference type="NCBI Taxonomy" id="290339"/>
    <lineage>
        <taxon>Bacteria</taxon>
        <taxon>Pseudomonadati</taxon>
        <taxon>Pseudomonadota</taxon>
        <taxon>Gammaproteobacteria</taxon>
        <taxon>Enterobacterales</taxon>
        <taxon>Enterobacteriaceae</taxon>
        <taxon>Cronobacter</taxon>
    </lineage>
</organism>
<feature type="chain" id="PRO_1000186152" description="Regulatory protein ViaA">
    <location>
        <begin position="1"/>
        <end position="483"/>
    </location>
</feature>
<proteinExistence type="inferred from homology"/>
<gene>
    <name evidence="1" type="primary">viaA</name>
    <name type="ordered locus">ESA_04019</name>
</gene>
<protein>
    <recommendedName>
        <fullName evidence="1">Regulatory protein ViaA</fullName>
    </recommendedName>
    <alternativeName>
        <fullName evidence="1">VWA interacting with AAA+ ATPase</fullName>
    </alternativeName>
</protein>
<name>VIAA_CROS8</name>
<dbReference type="EMBL" id="CP000783">
    <property type="protein sequence ID" value="ABU79205.1"/>
    <property type="molecule type" value="Genomic_DNA"/>
</dbReference>
<dbReference type="RefSeq" id="WP_012126199.1">
    <property type="nucleotide sequence ID" value="NC_009778.1"/>
</dbReference>
<dbReference type="SMR" id="A7MMV1"/>
<dbReference type="KEGG" id="esa:ESA_04019"/>
<dbReference type="PATRIC" id="fig|290339.8.peg.3567"/>
<dbReference type="HOGENOM" id="CLU_022130_0_0_6"/>
<dbReference type="Proteomes" id="UP000000260">
    <property type="component" value="Chromosome"/>
</dbReference>
<dbReference type="GO" id="GO:0005829">
    <property type="term" value="C:cytosol"/>
    <property type="evidence" value="ECO:0007669"/>
    <property type="project" value="TreeGrafter"/>
</dbReference>
<dbReference type="CDD" id="cd01462">
    <property type="entry name" value="VWA_YIEM_type"/>
    <property type="match status" value="1"/>
</dbReference>
<dbReference type="Gene3D" id="3.40.50.410">
    <property type="entry name" value="von Willebrand factor, type A domain"/>
    <property type="match status" value="1"/>
</dbReference>
<dbReference type="HAMAP" id="MF_01626">
    <property type="entry name" value="ViaA"/>
    <property type="match status" value="1"/>
</dbReference>
<dbReference type="InterPro" id="IPR008912">
    <property type="entry name" value="Uncharacterised_CoxE"/>
</dbReference>
<dbReference type="InterPro" id="IPR023481">
    <property type="entry name" value="Uncharacterised_ViaA"/>
</dbReference>
<dbReference type="InterPro" id="IPR002035">
    <property type="entry name" value="VWF_A"/>
</dbReference>
<dbReference type="InterPro" id="IPR036465">
    <property type="entry name" value="vWFA_dom_sf"/>
</dbReference>
<dbReference type="NCBIfam" id="NF008230">
    <property type="entry name" value="PRK10997.1"/>
    <property type="match status" value="1"/>
</dbReference>
<dbReference type="PANTHER" id="PTHR36846">
    <property type="entry name" value="PROTEIN VIAA"/>
    <property type="match status" value="1"/>
</dbReference>
<dbReference type="PANTHER" id="PTHR36846:SF1">
    <property type="entry name" value="PROTEIN VIAA"/>
    <property type="match status" value="1"/>
</dbReference>
<dbReference type="Pfam" id="PF05762">
    <property type="entry name" value="VWA_CoxE"/>
    <property type="match status" value="1"/>
</dbReference>
<dbReference type="SMART" id="SM00327">
    <property type="entry name" value="VWA"/>
    <property type="match status" value="1"/>
</dbReference>
<dbReference type="SUPFAM" id="SSF53300">
    <property type="entry name" value="vWA-like"/>
    <property type="match status" value="1"/>
</dbReference>
<comment type="function">
    <text evidence="1">Component of the RavA-ViaA chaperone complex, which may act on the membrane to optimize the function of some of the respiratory chains. ViaA stimulates the ATPase activity of RavA.</text>
</comment>
<comment type="subunit">
    <text evidence="1">Homodimer. Interacts with RavA.</text>
</comment>
<comment type="subcellular location">
    <subcellularLocation>
        <location evidence="1">Cytoplasm</location>
    </subcellularLocation>
</comment>
<comment type="similarity">
    <text evidence="1">Belongs to the ViaA family.</text>
</comment>